<dbReference type="EMBL" id="BA000004">
    <property type="protein sequence ID" value="BAB06495.1"/>
    <property type="molecule type" value="Genomic_DNA"/>
</dbReference>
<dbReference type="PIR" id="H83996">
    <property type="entry name" value="H83996"/>
</dbReference>
<dbReference type="RefSeq" id="WP_010898924.1">
    <property type="nucleotide sequence ID" value="NC_002570.2"/>
</dbReference>
<dbReference type="SMR" id="Q9K974"/>
<dbReference type="STRING" id="272558.gene:10728676"/>
<dbReference type="KEGG" id="bha:BH2776"/>
<dbReference type="eggNOG" id="COG0497">
    <property type="taxonomic scope" value="Bacteria"/>
</dbReference>
<dbReference type="HOGENOM" id="CLU_018297_3_1_9"/>
<dbReference type="OrthoDB" id="9806954at2"/>
<dbReference type="Proteomes" id="UP000001258">
    <property type="component" value="Chromosome"/>
</dbReference>
<dbReference type="GO" id="GO:0043590">
    <property type="term" value="C:bacterial nucleoid"/>
    <property type="evidence" value="ECO:0007669"/>
    <property type="project" value="TreeGrafter"/>
</dbReference>
<dbReference type="GO" id="GO:0005524">
    <property type="term" value="F:ATP binding"/>
    <property type="evidence" value="ECO:0007669"/>
    <property type="project" value="UniProtKB-KW"/>
</dbReference>
<dbReference type="GO" id="GO:0006310">
    <property type="term" value="P:DNA recombination"/>
    <property type="evidence" value="ECO:0007669"/>
    <property type="project" value="InterPro"/>
</dbReference>
<dbReference type="GO" id="GO:0006281">
    <property type="term" value="P:DNA repair"/>
    <property type="evidence" value="ECO:0007669"/>
    <property type="project" value="UniProtKB-KW"/>
</dbReference>
<dbReference type="GO" id="GO:0009432">
    <property type="term" value="P:SOS response"/>
    <property type="evidence" value="ECO:0007669"/>
    <property type="project" value="TreeGrafter"/>
</dbReference>
<dbReference type="CDD" id="cd03241">
    <property type="entry name" value="ABC_RecN"/>
    <property type="match status" value="2"/>
</dbReference>
<dbReference type="FunFam" id="3.40.50.300:FF:000319">
    <property type="entry name" value="DNA repair protein RecN"/>
    <property type="match status" value="1"/>
</dbReference>
<dbReference type="FunFam" id="3.40.50.300:FF:000356">
    <property type="entry name" value="DNA repair protein RecN"/>
    <property type="match status" value="1"/>
</dbReference>
<dbReference type="Gene3D" id="3.40.50.300">
    <property type="entry name" value="P-loop containing nucleotide triphosphate hydrolases"/>
    <property type="match status" value="2"/>
</dbReference>
<dbReference type="InterPro" id="IPR004604">
    <property type="entry name" value="DNA_recomb/repair_RecN"/>
</dbReference>
<dbReference type="InterPro" id="IPR027417">
    <property type="entry name" value="P-loop_NTPase"/>
</dbReference>
<dbReference type="InterPro" id="IPR003395">
    <property type="entry name" value="RecF/RecN/SMC_N"/>
</dbReference>
<dbReference type="NCBIfam" id="NF008121">
    <property type="entry name" value="PRK10869.1"/>
    <property type="match status" value="1"/>
</dbReference>
<dbReference type="NCBIfam" id="TIGR00634">
    <property type="entry name" value="recN"/>
    <property type="match status" value="1"/>
</dbReference>
<dbReference type="PANTHER" id="PTHR11059">
    <property type="entry name" value="DNA REPAIR PROTEIN RECN"/>
    <property type="match status" value="1"/>
</dbReference>
<dbReference type="PANTHER" id="PTHR11059:SF0">
    <property type="entry name" value="DNA REPAIR PROTEIN RECN"/>
    <property type="match status" value="1"/>
</dbReference>
<dbReference type="Pfam" id="PF02463">
    <property type="entry name" value="SMC_N"/>
    <property type="match status" value="1"/>
</dbReference>
<dbReference type="PIRSF" id="PIRSF003128">
    <property type="entry name" value="RecN"/>
    <property type="match status" value="1"/>
</dbReference>
<dbReference type="SUPFAM" id="SSF52540">
    <property type="entry name" value="P-loop containing nucleoside triphosphate hydrolases"/>
    <property type="match status" value="2"/>
</dbReference>
<reference key="1">
    <citation type="journal article" date="2000" name="Nucleic Acids Res.">
        <title>Complete genome sequence of the alkaliphilic bacterium Bacillus halodurans and genomic sequence comparison with Bacillus subtilis.</title>
        <authorList>
            <person name="Takami H."/>
            <person name="Nakasone K."/>
            <person name="Takaki Y."/>
            <person name="Maeno G."/>
            <person name="Sasaki R."/>
            <person name="Masui N."/>
            <person name="Fuji F."/>
            <person name="Hirama C."/>
            <person name="Nakamura Y."/>
            <person name="Ogasawara N."/>
            <person name="Kuhara S."/>
            <person name="Horikoshi K."/>
        </authorList>
    </citation>
    <scope>NUCLEOTIDE SEQUENCE [LARGE SCALE GENOMIC DNA]</scope>
    <source>
        <strain>ATCC BAA-125 / DSM 18197 / FERM 7344 / JCM 9153 / C-125</strain>
    </source>
</reference>
<keyword id="KW-0067">ATP-binding</keyword>
<keyword id="KW-0227">DNA damage</keyword>
<keyword id="KW-0234">DNA repair</keyword>
<keyword id="KW-0547">Nucleotide-binding</keyword>
<keyword id="KW-1185">Reference proteome</keyword>
<accession>Q9K974</accession>
<protein>
    <recommendedName>
        <fullName>DNA repair protein RecN</fullName>
    </recommendedName>
    <alternativeName>
        <fullName>Recombination protein N</fullName>
    </alternativeName>
</protein>
<name>RECN_HALH5</name>
<evidence type="ECO:0000250" key="1"/>
<evidence type="ECO:0000255" key="2"/>
<evidence type="ECO:0000305" key="3"/>
<organism>
    <name type="scientific">Halalkalibacterium halodurans (strain ATCC BAA-125 / DSM 18197 / FERM 7344 / JCM 9153 / C-125)</name>
    <name type="common">Bacillus halodurans</name>
    <dbReference type="NCBI Taxonomy" id="272558"/>
    <lineage>
        <taxon>Bacteria</taxon>
        <taxon>Bacillati</taxon>
        <taxon>Bacillota</taxon>
        <taxon>Bacilli</taxon>
        <taxon>Bacillales</taxon>
        <taxon>Bacillaceae</taxon>
        <taxon>Halalkalibacterium (ex Joshi et al. 2022)</taxon>
    </lineage>
</organism>
<proteinExistence type="inferred from homology"/>
<feature type="chain" id="PRO_0000188013" description="DNA repair protein RecN">
    <location>
        <begin position="1"/>
        <end position="565"/>
    </location>
</feature>
<feature type="binding site" evidence="2">
    <location>
        <begin position="29"/>
        <end position="36"/>
    </location>
    <ligand>
        <name>ATP</name>
        <dbReference type="ChEBI" id="CHEBI:30616"/>
    </ligand>
</feature>
<comment type="function">
    <text evidence="1">May be involved in recombinational repair of damaged DNA.</text>
</comment>
<comment type="similarity">
    <text evidence="3">Belongs to the RecN family.</text>
</comment>
<gene>
    <name type="primary">recN</name>
    <name type="ordered locus">BH2776</name>
</gene>
<sequence length="565" mass="63726">MLVELSIKQFAIIEQLTVSFDKGLTVLTGETGAGKSIIIDAIGLLLGGRGSAEYVRYGEKRAEIEGLFILEPKHPAFAKAEALGIQADDGMIVLRRDVTNQGKSICRINGKLVTLGILREIGQSLVDIHGQHEHQTLLHKEQHLSLLDHFAGPPLETVLDEYKELYKQYLALERQLAQLTENEKEMAQKTDLFQYQLKEIEAANLEPGEDKRLEAERLKLANAEKLFKSVHDAYNNLYGEGRGLEWINNALTHIEDASSYDPELGKLQQHVQEQYYLLEEAMFTLRDYLDKLEFDPTRLEMIESRLHELQKLKRKYGDSVDAIVEYASTIEEQLDSILHKDDRIKQLEQSLETMRLDLEVESAALTNIRKQIAMELTESIHEQLRALYMEKTSFEVKFHETAEGKKPFRENGVDDVEFYLSTNPGEPVKPLAKVASGGEISRIMLALKTIFSNHQGVTSVIFDEVDTGVSGRVAQAIAEKIRHISVGSQVLCISHLPQVAAMADTHLYISKKEVGGRVTTEVRALKDEEKVEEIARMIAGVEMTELTKEHAKELLDLATSIKCNH</sequence>